<comment type="function">
    <text evidence="3 4">Interacts with photosystem II (PSII) core complexes and participates in the maintenance of normal PSII activity under photoinhibitory stress. May protect against photodamage or stabilize PSII under high-light stress (PubMed:25846821). Participates in the maintainance of proper PSII function under high-light stress by protecting PSII from photooxidative damage (PubMed:26337456).</text>
</comment>
<comment type="subunit">
    <text evidence="3">Interacts with psbA, psbB, psbC and psbD.</text>
</comment>
<comment type="subcellular location">
    <subcellularLocation>
        <location evidence="3">Plastid</location>
        <location evidence="3">Chloroplast thylakoid membrane</location>
        <topology evidence="1">Single-pass membrane protein</topology>
    </subcellularLocation>
</comment>
<comment type="disruption phenotype">
    <text evidence="3 4">Altered photosystem II (PSII) function under high-irradiance light (PubMed:25846821). Elevated photodamage to PSII reaction center proteins after high-light treatment (PubMed:26337456).</text>
</comment>
<protein>
    <recommendedName>
        <fullName evidence="5">Protein MAINTENANCE OF PSII UNDER HIGH LIGHT 1</fullName>
    </recommendedName>
</protein>
<proteinExistence type="evidence at protein level"/>
<reference key="1">
    <citation type="journal article" date="1998" name="DNA Res.">
        <title>Structural analysis of Arabidopsis thaliana chromosome 5. V. Sequence features of the regions of 1,381,565 bp covered by twenty one physically assigned P1 and TAC clones.</title>
        <authorList>
            <person name="Kaneko T."/>
            <person name="Kotani H."/>
            <person name="Nakamura Y."/>
            <person name="Sato S."/>
            <person name="Asamizu E."/>
            <person name="Miyajima N."/>
            <person name="Tabata S."/>
        </authorList>
    </citation>
    <scope>NUCLEOTIDE SEQUENCE [LARGE SCALE GENOMIC DNA]</scope>
    <source>
        <strain>cv. Columbia</strain>
    </source>
</reference>
<reference key="2">
    <citation type="journal article" date="2017" name="Plant J.">
        <title>Araport11: a complete reannotation of the Arabidopsis thaliana reference genome.</title>
        <authorList>
            <person name="Cheng C.Y."/>
            <person name="Krishnakumar V."/>
            <person name="Chan A.P."/>
            <person name="Thibaud-Nissen F."/>
            <person name="Schobel S."/>
            <person name="Town C.D."/>
        </authorList>
    </citation>
    <scope>GENOME REANNOTATION</scope>
    <source>
        <strain>cv. Columbia</strain>
    </source>
</reference>
<reference key="3">
    <citation type="journal article" date="2003" name="Science">
        <title>Empirical analysis of transcriptional activity in the Arabidopsis genome.</title>
        <authorList>
            <person name="Yamada K."/>
            <person name="Lim J."/>
            <person name="Dale J.M."/>
            <person name="Chen H."/>
            <person name="Shinn P."/>
            <person name="Palm C.J."/>
            <person name="Southwick A.M."/>
            <person name="Wu H.C."/>
            <person name="Kim C.J."/>
            <person name="Nguyen M."/>
            <person name="Pham P.K."/>
            <person name="Cheuk R.F."/>
            <person name="Karlin-Newmann G."/>
            <person name="Liu S.X."/>
            <person name="Lam B."/>
            <person name="Sakano H."/>
            <person name="Wu T."/>
            <person name="Yu G."/>
            <person name="Miranda M."/>
            <person name="Quach H.L."/>
            <person name="Tripp M."/>
            <person name="Chang C.H."/>
            <person name="Lee J.M."/>
            <person name="Toriumi M.J."/>
            <person name="Chan M.M."/>
            <person name="Tang C.C."/>
            <person name="Onodera C.S."/>
            <person name="Deng J.M."/>
            <person name="Akiyama K."/>
            <person name="Ansari Y."/>
            <person name="Arakawa T."/>
            <person name="Banh J."/>
            <person name="Banno F."/>
            <person name="Bowser L."/>
            <person name="Brooks S.Y."/>
            <person name="Carninci P."/>
            <person name="Chao Q."/>
            <person name="Choy N."/>
            <person name="Enju A."/>
            <person name="Goldsmith A.D."/>
            <person name="Gurjal M."/>
            <person name="Hansen N.F."/>
            <person name="Hayashizaki Y."/>
            <person name="Johnson-Hopson C."/>
            <person name="Hsuan V.W."/>
            <person name="Iida K."/>
            <person name="Karnes M."/>
            <person name="Khan S."/>
            <person name="Koesema E."/>
            <person name="Ishida J."/>
            <person name="Jiang P.X."/>
            <person name="Jones T."/>
            <person name="Kawai J."/>
            <person name="Kamiya A."/>
            <person name="Meyers C."/>
            <person name="Nakajima M."/>
            <person name="Narusaka M."/>
            <person name="Seki M."/>
            <person name="Sakurai T."/>
            <person name="Satou M."/>
            <person name="Tamse R."/>
            <person name="Vaysberg M."/>
            <person name="Wallender E.K."/>
            <person name="Wong C."/>
            <person name="Yamamura Y."/>
            <person name="Yuan S."/>
            <person name="Shinozaki K."/>
            <person name="Davis R.W."/>
            <person name="Theologis A."/>
            <person name="Ecker J.R."/>
        </authorList>
    </citation>
    <scope>NUCLEOTIDE SEQUENCE [LARGE SCALE MRNA]</scope>
    <source>
        <strain>cv. Columbia</strain>
    </source>
</reference>
<reference key="4">
    <citation type="submission" date="2002-03" db="EMBL/GenBank/DDBJ databases">
        <title>Full-length cDNA from Arabidopsis thaliana.</title>
        <authorList>
            <person name="Brover V.V."/>
            <person name="Troukhan M.E."/>
            <person name="Alexandrov N.A."/>
            <person name="Lu Y.-P."/>
            <person name="Flavell R.B."/>
            <person name="Feldmann K.A."/>
        </authorList>
    </citation>
    <scope>NUCLEOTIDE SEQUENCE [LARGE SCALE MRNA]</scope>
</reference>
<reference key="5">
    <citation type="journal article" date="2015" name="Plant J.">
        <title>A land plant-specific thylakoid membrane protein contributes to photosystem II maintenance in Arabidopsis thaliana.</title>
        <authorList>
            <person name="Liu J."/>
            <person name="Last R.L."/>
        </authorList>
    </citation>
    <scope>FUNCTION</scope>
    <scope>INTERACTION WITH PSBA; PSBB; PSBC AND PSBD</scope>
    <scope>SUBCELLULAR LOCATION</scope>
    <scope>DISRUPTION PHENOTYPE</scope>
</reference>
<reference key="6">
    <citation type="journal article" date="2015" name="Plant Signal. Behav.">
        <title>MPH1 is a thylakoid membrane protein involved in protecting photosystem II from photodamage in land plants.</title>
        <authorList>
            <person name="Liu J."/>
            <person name="Last R.L."/>
        </authorList>
    </citation>
    <scope>FUNCTION</scope>
    <scope>DISRUPTION PHENOTYPE</scope>
</reference>
<feature type="chain" id="PRO_0000442055" description="Protein MAINTENANCE OF PSII UNDER HIGH LIGHT 1">
    <location>
        <begin position="1"/>
        <end position="235"/>
    </location>
</feature>
<feature type="transmembrane region" description="Helical" evidence="1">
    <location>
        <begin position="127"/>
        <end position="147"/>
    </location>
</feature>
<feature type="region of interest" description="Disordered" evidence="2">
    <location>
        <begin position="181"/>
        <end position="235"/>
    </location>
</feature>
<feature type="compositionally biased region" description="Polar residues" evidence="2">
    <location>
        <begin position="200"/>
        <end position="214"/>
    </location>
</feature>
<feature type="compositionally biased region" description="Polar residues" evidence="2">
    <location>
        <begin position="224"/>
        <end position="235"/>
    </location>
</feature>
<feature type="sequence conflict" description="In Ref. 4; AAM62950." evidence="6" ref="4">
    <original>S</original>
    <variation>P</variation>
    <location>
        <position position="205"/>
    </location>
</feature>
<feature type="sequence conflict" description="In Ref. 4; AAM62950." evidence="6" ref="4">
    <original>S</original>
    <variation>F</variation>
    <location>
        <position position="227"/>
    </location>
</feature>
<accession>Q9FL44</accession>
<accession>Q8LDY0</accession>
<sequence length="235" mass="24395">MSNVLLSPNGYVFASPKPLGRFINSKSGGRKLFFSVVRASSDDADCNAEECAPEKEVGTVSMEWLAGEKTKVVGTFPPRKPRGWTGYVEKDTAGQTNVYSIEPAVYVAESAISSGTAGSSADGAENTAAIVAGIALIAVAAASSILLQVGKDAPTRPKAVDYSGPSLSYYINKFKPSEIVQPSTPSVTEAPPVAELETSLPETPSVAQQETSLPETMASEAQPEASSVPTTSSTS</sequence>
<gene>
    <name evidence="5" type="primary">MPH1</name>
    <name evidence="7" type="ordered locus">At5g07020</name>
    <name evidence="8" type="ORF">MOJ9.19</name>
</gene>
<name>MPH1_ARATH</name>
<keyword id="KW-0150">Chloroplast</keyword>
<keyword id="KW-0472">Membrane</keyword>
<keyword id="KW-0934">Plastid</keyword>
<keyword id="KW-1185">Reference proteome</keyword>
<keyword id="KW-0346">Stress response</keyword>
<keyword id="KW-0793">Thylakoid</keyword>
<keyword id="KW-0812">Transmembrane</keyword>
<keyword id="KW-1133">Transmembrane helix</keyword>
<dbReference type="EMBL" id="AB010697">
    <property type="protein sequence ID" value="BAB11160.1"/>
    <property type="molecule type" value="Genomic_DNA"/>
</dbReference>
<dbReference type="EMBL" id="CP002688">
    <property type="protein sequence ID" value="AED91099.1"/>
    <property type="molecule type" value="Genomic_DNA"/>
</dbReference>
<dbReference type="EMBL" id="AY050949">
    <property type="protein sequence ID" value="AAK93626.1"/>
    <property type="molecule type" value="mRNA"/>
</dbReference>
<dbReference type="EMBL" id="AY091179">
    <property type="protein sequence ID" value="AAM14118.1"/>
    <property type="molecule type" value="mRNA"/>
</dbReference>
<dbReference type="EMBL" id="AY085732">
    <property type="protein sequence ID" value="AAM62950.1"/>
    <property type="molecule type" value="mRNA"/>
</dbReference>
<dbReference type="RefSeq" id="NP_568178.1">
    <property type="nucleotide sequence ID" value="NM_120784.4"/>
</dbReference>
<dbReference type="FunCoup" id="Q9FL44">
    <property type="interactions" value="2156"/>
</dbReference>
<dbReference type="STRING" id="3702.Q9FL44"/>
<dbReference type="GlyGen" id="Q9FL44">
    <property type="glycosylation" value="1 site"/>
</dbReference>
<dbReference type="PaxDb" id="3702-AT5G07020.1"/>
<dbReference type="ProteomicsDB" id="238899"/>
<dbReference type="EnsemblPlants" id="AT5G07020.1">
    <property type="protein sequence ID" value="AT5G07020.1"/>
    <property type="gene ID" value="AT5G07020"/>
</dbReference>
<dbReference type="GeneID" id="830593"/>
<dbReference type="Gramene" id="AT5G07020.1">
    <property type="protein sequence ID" value="AT5G07020.1"/>
    <property type="gene ID" value="AT5G07020"/>
</dbReference>
<dbReference type="KEGG" id="ath:AT5G07020"/>
<dbReference type="Araport" id="AT5G07020"/>
<dbReference type="TAIR" id="AT5G07020">
    <property type="gene designation" value="MPH1"/>
</dbReference>
<dbReference type="eggNOG" id="KOG1075">
    <property type="taxonomic scope" value="Eukaryota"/>
</dbReference>
<dbReference type="HOGENOM" id="CLU_072185_0_0_1"/>
<dbReference type="InParanoid" id="Q9FL44"/>
<dbReference type="OMA" id="FSTYQKD"/>
<dbReference type="PhylomeDB" id="Q9FL44"/>
<dbReference type="PRO" id="PR:Q9FL44"/>
<dbReference type="Proteomes" id="UP000006548">
    <property type="component" value="Chromosome 5"/>
</dbReference>
<dbReference type="ExpressionAtlas" id="Q9FL44">
    <property type="expression patterns" value="baseline and differential"/>
</dbReference>
<dbReference type="GO" id="GO:0009507">
    <property type="term" value="C:chloroplast"/>
    <property type="evidence" value="ECO:0007005"/>
    <property type="project" value="TAIR"/>
</dbReference>
<dbReference type="GO" id="GO:0009535">
    <property type="term" value="C:chloroplast thylakoid membrane"/>
    <property type="evidence" value="ECO:0000314"/>
    <property type="project" value="TAIR"/>
</dbReference>
<dbReference type="GO" id="GO:0005886">
    <property type="term" value="C:plasma membrane"/>
    <property type="evidence" value="ECO:0007005"/>
    <property type="project" value="TAIR"/>
</dbReference>
<dbReference type="GO" id="GO:0009579">
    <property type="term" value="C:thylakoid"/>
    <property type="evidence" value="ECO:0007005"/>
    <property type="project" value="TAIR"/>
</dbReference>
<dbReference type="GO" id="GO:0061635">
    <property type="term" value="P:regulation of protein complex stability"/>
    <property type="evidence" value="ECO:0000315"/>
    <property type="project" value="TAIR"/>
</dbReference>
<dbReference type="InterPro" id="IPR038936">
    <property type="entry name" value="MPH1"/>
</dbReference>
<dbReference type="PANTHER" id="PTHR35753">
    <property type="entry name" value="PROTEIN MAINTENANCE OF PSII UNDER HIGH LIGHT 1"/>
    <property type="match status" value="1"/>
</dbReference>
<dbReference type="PANTHER" id="PTHR35753:SF2">
    <property type="entry name" value="PROTEIN MAINTENANCE OF PSII UNDER HIGH LIGHT 1"/>
    <property type="match status" value="1"/>
</dbReference>
<organism>
    <name type="scientific">Arabidopsis thaliana</name>
    <name type="common">Mouse-ear cress</name>
    <dbReference type="NCBI Taxonomy" id="3702"/>
    <lineage>
        <taxon>Eukaryota</taxon>
        <taxon>Viridiplantae</taxon>
        <taxon>Streptophyta</taxon>
        <taxon>Embryophyta</taxon>
        <taxon>Tracheophyta</taxon>
        <taxon>Spermatophyta</taxon>
        <taxon>Magnoliopsida</taxon>
        <taxon>eudicotyledons</taxon>
        <taxon>Gunneridae</taxon>
        <taxon>Pentapetalae</taxon>
        <taxon>rosids</taxon>
        <taxon>malvids</taxon>
        <taxon>Brassicales</taxon>
        <taxon>Brassicaceae</taxon>
        <taxon>Camelineae</taxon>
        <taxon>Arabidopsis</taxon>
    </lineage>
</organism>
<evidence type="ECO:0000255" key="1"/>
<evidence type="ECO:0000256" key="2">
    <source>
        <dbReference type="SAM" id="MobiDB-lite"/>
    </source>
</evidence>
<evidence type="ECO:0000269" key="3">
    <source>
    </source>
</evidence>
<evidence type="ECO:0000269" key="4">
    <source>
    </source>
</evidence>
<evidence type="ECO:0000303" key="5">
    <source>
    </source>
</evidence>
<evidence type="ECO:0000305" key="6"/>
<evidence type="ECO:0000312" key="7">
    <source>
        <dbReference type="Araport" id="AT5G07020"/>
    </source>
</evidence>
<evidence type="ECO:0000312" key="8">
    <source>
        <dbReference type="EMBL" id="BAB11160.1"/>
    </source>
</evidence>